<sequence length="158" mass="17770">MVPKLFTSQICVLLLFGLLSVEVSLQVKPQQFSWAQWFSIQHIQTTPLHCTSAMRAINRYQPRCKNQNTFLHTTFANVVNVCGNTNITCPRNASLNNCHHSGVQVPLTYCNLTGPQTISNCVYSSTQANMFYVVACDNRDPRDPPQYPVVPVHLDTTI</sequence>
<organism>
    <name type="scientific">Saguinus oedipus</name>
    <name type="common">Cotton-top tamarin</name>
    <dbReference type="NCBI Taxonomy" id="9490"/>
    <lineage>
        <taxon>Eukaryota</taxon>
        <taxon>Metazoa</taxon>
        <taxon>Chordata</taxon>
        <taxon>Craniata</taxon>
        <taxon>Vertebrata</taxon>
        <taxon>Euteleostomi</taxon>
        <taxon>Mammalia</taxon>
        <taxon>Eutheria</taxon>
        <taxon>Euarchontoglires</taxon>
        <taxon>Primates</taxon>
        <taxon>Haplorrhini</taxon>
        <taxon>Platyrrhini</taxon>
        <taxon>Cebidae</taxon>
        <taxon>Callitrichinae</taxon>
        <taxon>Saguinus</taxon>
    </lineage>
</organism>
<reference key="1">
    <citation type="journal article" date="1995" name="Nat. Genet.">
        <title>Rapid evolution of a unique family of primate ribonuclease genes.</title>
        <authorList>
            <person name="Rosenberg H.F."/>
            <person name="Dyer K.D."/>
            <person name="Tiffany H.L."/>
            <person name="Gonzalez M."/>
        </authorList>
    </citation>
    <scope>NUCLEOTIDE SEQUENCE [GENOMIC DNA]</scope>
</reference>
<feature type="signal peptide" evidence="1">
    <location>
        <begin position="1"/>
        <end position="27"/>
    </location>
</feature>
<feature type="chain" id="PRO_0000030881" description="Non-secretory ribonuclease">
    <location>
        <begin position="28"/>
        <end position="158"/>
    </location>
</feature>
<feature type="active site" description="Proton acceptor" evidence="1">
    <location>
        <position position="42"/>
    </location>
</feature>
<feature type="active site" description="Proton donor" evidence="1">
    <location>
        <position position="153"/>
    </location>
</feature>
<feature type="binding site" evidence="1">
    <location>
        <begin position="65"/>
        <end position="69"/>
    </location>
    <ligand>
        <name>substrate</name>
    </ligand>
</feature>
<feature type="modified residue" description="3'-nitrotyrosine" evidence="3">
    <location>
        <position position="60"/>
    </location>
</feature>
<feature type="glycosylation site" description="C-linked (Man) tryptophan" evidence="3">
    <location>
        <position position="34"/>
    </location>
</feature>
<feature type="glycosylation site" description="N-linked (GlcNAc...) asparagine" evidence="4">
    <location>
        <position position="86"/>
    </location>
</feature>
<feature type="glycosylation site" description="N-linked (GlcNAc...) asparagine" evidence="4">
    <location>
        <position position="92"/>
    </location>
</feature>
<feature type="glycosylation site" description="N-linked (GlcNAc...) asparagine" evidence="4">
    <location>
        <position position="111"/>
    </location>
</feature>
<feature type="disulfide bond" evidence="1">
    <location>
        <begin position="50"/>
        <end position="110"/>
    </location>
</feature>
<feature type="disulfide bond" evidence="1">
    <location>
        <begin position="64"/>
        <end position="121"/>
    </location>
</feature>
<feature type="disulfide bond" evidence="1">
    <location>
        <begin position="82"/>
        <end position="136"/>
    </location>
</feature>
<feature type="disulfide bond" evidence="1">
    <location>
        <begin position="89"/>
        <end position="98"/>
    </location>
</feature>
<proteinExistence type="inferred from homology"/>
<gene>
    <name type="primary">RNASE2</name>
    <name type="synonym">EDN</name>
    <name type="synonym">RNS2</name>
</gene>
<accession>P47786</accession>
<keyword id="KW-1015">Disulfide bond</keyword>
<keyword id="KW-0255">Endonuclease</keyword>
<keyword id="KW-0325">Glycoprotein</keyword>
<keyword id="KW-0378">Hydrolase</keyword>
<keyword id="KW-0456">Lyase</keyword>
<keyword id="KW-0458">Lysosome</keyword>
<keyword id="KW-0944">Nitration</keyword>
<keyword id="KW-0540">Nuclease</keyword>
<keyword id="KW-0732">Signal</keyword>
<comment type="function">
    <text>This is a non-secretory ribonuclease. It is a pyrimidine specific nuclease with a slight preference for U. Cytotoxin and helminthotoxin. Possesses a wide variety of biological activities.</text>
</comment>
<comment type="catalytic activity">
    <reaction evidence="2">
        <text>an [RNA] containing cytidine + H2O = an [RNA]-3'-cytidine-3'-phosphate + a 5'-hydroxy-ribonucleotide-3'-[RNA].</text>
        <dbReference type="EC" id="4.6.1.18"/>
    </reaction>
</comment>
<comment type="catalytic activity">
    <reaction evidence="2">
        <text>an [RNA] containing uridine + H2O = an [RNA]-3'-uridine-3'-phosphate + a 5'-hydroxy-ribonucleotide-3'-[RNA].</text>
        <dbReference type="EC" id="4.6.1.18"/>
    </reaction>
</comment>
<comment type="subunit">
    <text evidence="1">Interacts with and forms a tight 1:1 complex with RNH1. Dimerization of two such complexes may occur (By similarity).</text>
</comment>
<comment type="subcellular location">
    <subcellularLocation>
        <location evidence="5">Lysosome</location>
    </subcellularLocation>
    <subcellularLocation>
        <location>Cytoplasmic granule</location>
    </subcellularLocation>
    <text>Matrix of eosinophil's large specific granule.</text>
</comment>
<comment type="similarity">
    <text evidence="5">Belongs to the pancreatic ribonuclease family.</text>
</comment>
<dbReference type="EC" id="4.6.1.18" evidence="2"/>
<dbReference type="EMBL" id="U24099">
    <property type="protein sequence ID" value="AAC50151.1"/>
    <property type="molecule type" value="Genomic_DNA"/>
</dbReference>
<dbReference type="PIR" id="I61900">
    <property type="entry name" value="I61900"/>
</dbReference>
<dbReference type="SMR" id="P47786"/>
<dbReference type="GlyCosmos" id="P47786">
    <property type="glycosylation" value="4 sites, No reported glycans"/>
</dbReference>
<dbReference type="GO" id="GO:0005615">
    <property type="term" value="C:extracellular space"/>
    <property type="evidence" value="ECO:0007669"/>
    <property type="project" value="TreeGrafter"/>
</dbReference>
<dbReference type="GO" id="GO:0005764">
    <property type="term" value="C:lysosome"/>
    <property type="evidence" value="ECO:0007669"/>
    <property type="project" value="UniProtKB-SubCell"/>
</dbReference>
<dbReference type="GO" id="GO:0016829">
    <property type="term" value="F:lyase activity"/>
    <property type="evidence" value="ECO:0007669"/>
    <property type="project" value="UniProtKB-KW"/>
</dbReference>
<dbReference type="GO" id="GO:0003676">
    <property type="term" value="F:nucleic acid binding"/>
    <property type="evidence" value="ECO:0007669"/>
    <property type="project" value="InterPro"/>
</dbReference>
<dbReference type="GO" id="GO:0004522">
    <property type="term" value="F:ribonuclease A activity"/>
    <property type="evidence" value="ECO:0007669"/>
    <property type="project" value="UniProtKB-EC"/>
</dbReference>
<dbReference type="GO" id="GO:0006935">
    <property type="term" value="P:chemotaxis"/>
    <property type="evidence" value="ECO:0007669"/>
    <property type="project" value="TreeGrafter"/>
</dbReference>
<dbReference type="GO" id="GO:0051607">
    <property type="term" value="P:defense response to virus"/>
    <property type="evidence" value="ECO:0000314"/>
    <property type="project" value="UniProtKB"/>
</dbReference>
<dbReference type="GO" id="GO:0002227">
    <property type="term" value="P:innate immune response in mucosa"/>
    <property type="evidence" value="ECO:0007669"/>
    <property type="project" value="TreeGrafter"/>
</dbReference>
<dbReference type="CDD" id="cd06265">
    <property type="entry name" value="RNase_A_canonical"/>
    <property type="match status" value="1"/>
</dbReference>
<dbReference type="FunFam" id="3.10.130.10:FF:000001">
    <property type="entry name" value="Ribonuclease pancreatic"/>
    <property type="match status" value="1"/>
</dbReference>
<dbReference type="Gene3D" id="3.10.130.10">
    <property type="entry name" value="Ribonuclease A-like domain"/>
    <property type="match status" value="1"/>
</dbReference>
<dbReference type="InterPro" id="IPR001427">
    <property type="entry name" value="RNaseA"/>
</dbReference>
<dbReference type="InterPro" id="IPR036816">
    <property type="entry name" value="RNaseA-like_dom_sf"/>
</dbReference>
<dbReference type="InterPro" id="IPR023411">
    <property type="entry name" value="RNaseA_AS"/>
</dbReference>
<dbReference type="InterPro" id="IPR023412">
    <property type="entry name" value="RNaseA_domain"/>
</dbReference>
<dbReference type="PANTHER" id="PTHR11437:SF62">
    <property type="entry name" value="NON-SECRETORY RIBONUCLEASE"/>
    <property type="match status" value="1"/>
</dbReference>
<dbReference type="PANTHER" id="PTHR11437">
    <property type="entry name" value="RIBONUCLEASE"/>
    <property type="match status" value="1"/>
</dbReference>
<dbReference type="Pfam" id="PF00074">
    <property type="entry name" value="RnaseA"/>
    <property type="match status" value="1"/>
</dbReference>
<dbReference type="PRINTS" id="PR00794">
    <property type="entry name" value="RIBONUCLEASE"/>
</dbReference>
<dbReference type="SMART" id="SM00092">
    <property type="entry name" value="RNAse_Pc"/>
    <property type="match status" value="1"/>
</dbReference>
<dbReference type="SUPFAM" id="SSF54076">
    <property type="entry name" value="RNase A-like"/>
    <property type="match status" value="1"/>
</dbReference>
<dbReference type="PROSITE" id="PS00127">
    <property type="entry name" value="RNASE_PANCREATIC"/>
    <property type="match status" value="1"/>
</dbReference>
<name>RNAS2_SAGOE</name>
<evidence type="ECO:0000250" key="1"/>
<evidence type="ECO:0000250" key="2">
    <source>
        <dbReference type="UniProtKB" id="O18937"/>
    </source>
</evidence>
<evidence type="ECO:0000250" key="3">
    <source>
        <dbReference type="UniProtKB" id="P10153"/>
    </source>
</evidence>
<evidence type="ECO:0000255" key="4"/>
<evidence type="ECO:0000305" key="5"/>
<protein>
    <recommendedName>
        <fullName>Non-secretory ribonuclease</fullName>
        <ecNumber evidence="2">4.6.1.18</ecNumber>
    </recommendedName>
    <alternativeName>
        <fullName>Eosinophil-derived neurotoxin</fullName>
    </alternativeName>
    <alternativeName>
        <fullName>RNase UpI-2</fullName>
    </alternativeName>
    <alternativeName>
        <fullName>Ribonuclease 2</fullName>
        <shortName>RNase 2</shortName>
    </alternativeName>
    <alternativeName>
        <fullName>Ribonuclease US</fullName>
    </alternativeName>
</protein>